<dbReference type="EMBL" id="L24075">
    <property type="protein sequence ID" value="AAA22779.1"/>
    <property type="molecule type" value="Genomic_DNA"/>
</dbReference>
<dbReference type="EMBL" id="U09819">
    <property type="protein sequence ID" value="AAB91586.1"/>
    <property type="molecule type" value="Genomic_DNA"/>
</dbReference>
<dbReference type="EMBL" id="M99263">
    <property type="protein sequence ID" value="AAA22774.1"/>
    <property type="status" value="ALT_FRAME"/>
    <property type="molecule type" value="Genomic_DNA"/>
</dbReference>
<dbReference type="EMBL" id="M99263">
    <property type="protein sequence ID" value="AAA22775.1"/>
    <property type="status" value="ALT_FRAME"/>
    <property type="molecule type" value="Genomic_DNA"/>
</dbReference>
<dbReference type="EMBL" id="M86869">
    <property type="protein sequence ID" value="AAA22837.1"/>
    <property type="molecule type" value="Genomic_DNA"/>
</dbReference>
<dbReference type="EMBL" id="M83944">
    <property type="protein sequence ID" value="AAA22769.1"/>
    <property type="status" value="ALT_INIT"/>
    <property type="molecule type" value="Genomic_DNA"/>
</dbReference>
<dbReference type="EMBL" id="U38418">
    <property type="protein sequence ID" value="AAB01536.1"/>
    <property type="molecule type" value="Genomic_DNA"/>
</dbReference>
<dbReference type="PIR" id="I39987">
    <property type="entry name" value="I39987"/>
</dbReference>
<dbReference type="SMR" id="P39774"/>
<dbReference type="GO" id="GO:0005886">
    <property type="term" value="C:plasma membrane"/>
    <property type="evidence" value="ECO:0007669"/>
    <property type="project" value="UniProtKB-SubCell"/>
</dbReference>
<dbReference type="InterPro" id="IPR006827">
    <property type="entry name" value="Lant_deHydtase_N"/>
</dbReference>
<dbReference type="InterPro" id="IPR023809">
    <property type="entry name" value="Thiopep_bacteriocin_synth_dom"/>
</dbReference>
<dbReference type="NCBIfam" id="TIGR03891">
    <property type="entry name" value="thiopep_ocin"/>
    <property type="match status" value="1"/>
</dbReference>
<dbReference type="Pfam" id="PF14028">
    <property type="entry name" value="Lant_dehydr_C"/>
    <property type="match status" value="1"/>
</dbReference>
<dbReference type="Pfam" id="PF04738">
    <property type="entry name" value="Lant_dehydr_N"/>
    <property type="match status" value="1"/>
</dbReference>
<keyword id="KW-1003">Cell membrane</keyword>
<keyword id="KW-0472">Membrane</keyword>
<keyword id="KW-0813">Transport</keyword>
<proteinExistence type="predicted"/>
<organism>
    <name type="scientific">Bacillus subtilis</name>
    <dbReference type="NCBI Taxonomy" id="1423"/>
    <lineage>
        <taxon>Bacteria</taxon>
        <taxon>Bacillati</taxon>
        <taxon>Bacillota</taxon>
        <taxon>Bacilli</taxon>
        <taxon>Bacillales</taxon>
        <taxon>Bacillaceae</taxon>
        <taxon>Bacillus</taxon>
    </lineage>
</organism>
<feature type="chain" id="PRO_0000072091" description="Subtilin biosynthesis protein SpaB">
    <location>
        <begin position="1"/>
        <end position="1030"/>
    </location>
</feature>
<feature type="sequence conflict" description="In Ref. 3; AAA22774." evidence="1" ref="3">
    <original>L</original>
    <variation>F</variation>
    <location>
        <position position="126"/>
    </location>
</feature>
<feature type="sequence conflict" description="In Ref. 3; AAA22774." evidence="1" ref="3">
    <original>D</original>
    <variation>N</variation>
    <location>
        <position position="261"/>
    </location>
</feature>
<feature type="sequence conflict" description="In Ref. 3; AAA22774." evidence="1" ref="3">
    <original>LA</original>
    <variation>AG</variation>
    <location>
        <begin position="304"/>
        <end position="305"/>
    </location>
</feature>
<feature type="sequence conflict" description="In Ref. 3; AAA22774." evidence="1" ref="3">
    <original>H</original>
    <variation>K</variation>
    <location>
        <position position="344"/>
    </location>
</feature>
<feature type="sequence conflict" description="In Ref. 3; AAA22774." evidence="1" ref="3">
    <original>N</original>
    <variation>I</variation>
    <location>
        <position position="553"/>
    </location>
</feature>
<feature type="sequence conflict" description="In Ref. 3; AAA22774." evidence="1" ref="3">
    <original>F</original>
    <variation>L</variation>
    <location>
        <position position="584"/>
    </location>
</feature>
<feature type="sequence conflict" description="In Ref. 3; AAA22774." evidence="1" ref="3">
    <original>P</original>
    <variation>A</variation>
    <location>
        <position position="647"/>
    </location>
</feature>
<feature type="sequence conflict" description="In Ref. 3; AAA22774." evidence="1" ref="3">
    <original>E</original>
    <variation>V</variation>
    <location>
        <position position="730"/>
    </location>
</feature>
<comment type="function">
    <text>Involved in the post-translational modification of the lantibiotic subtilin.</text>
</comment>
<comment type="subcellular location">
    <subcellularLocation>
        <location>Cell membrane</location>
    </subcellularLocation>
    <text>Possibly associated with, and anchored to, the cytoplasmic side of the membrane.</text>
</comment>
<comment type="similarity">
    <text evidence="1">To S.epidermidis EpiB and L.lactis NisB.</text>
</comment>
<comment type="caution">
    <text evidence="2">Was originally proposed to code for two separate adjacent ORFs, SpaE and SpaD.</text>
</comment>
<comment type="sequence caution" evidence="1">
    <conflict type="erroneous initiation">
        <sequence resource="EMBL-CDS" id="AAA22769"/>
    </conflict>
</comment>
<comment type="sequence caution" evidence="1">
    <conflict type="frameshift">
        <sequence resource="EMBL-CDS" id="AAA22774"/>
    </conflict>
</comment>
<comment type="sequence caution" evidence="1">
    <conflict type="frameshift">
        <sequence resource="EMBL-CDS" id="AAA22775"/>
    </conflict>
</comment>
<gene>
    <name type="primary">spaB</name>
    <name type="synonym">spaD</name>
    <name type="synonym">spaE</name>
</gene>
<evidence type="ECO:0000305" key="1"/>
<evidence type="ECO:0000305" key="2">
    <source>
    </source>
</evidence>
<sequence length="1030" mass="120529">MKSLYTPTDYYMIRVPLVHQDLKNENSQDIDQLLHDLCNDSLFREQILVSSRTLYETIHTFLQAPDKLKGKKKRNFQQAILKYATRRATRTTPFGLFSSVGIGSFSDKNHLSFNQHSFYKKARVDLEWLYQLIRKLENEYTDRLSFTLNSACYIKGDRAYLLYSTDGKSEEVSVRATSVFYLINELCGESAAYQDIIRCLIDNYPNTPINKINQYVADLIDKEFLISNLRPPMTVSDQFQYLIDQAESRHIPNELIQACKDIQYQIDAYNRITIGEGEHQYLNLIETMNKLIKASSPLQVDAGLADSSIQLDNETSLAISELASMFTYMASPSANTLDHLEKYHNVFLERYGYEREVPLLEMLCSSTGIGAPATYTNPANEFFEETSFGEQFSPEMKQFFMRKYFESVRKKAPIQLDDETFHRICNSEIADEEIPLSFELNFFVKLRNGRVKLYLGPNVGSTRAGKTFGRFSHMSDSISEIIKTLHNKEKELTECNTKVCELSIVPNQTRSGNVTRNVSYREKEMSLFTNSALHLNDSVKAEDILIGINKDHNFYARHKTTGEILSFESNHMFNPLLMTNAVRFLLEISRDGKRKWNDFPWFSIYSDFKYIPEIKYKEITLSCEQWLIYKNDLSMHSNASLEEIKSPFFEFHRTYELPQTFYIVNADNRLLIDIENDCTLDVFFWELKKTNHNQPLQLVAVEHDADALMDRNQNDYSGEIVVPLLRKQPEKPLYLPVLNAIEGSGSDRIKMPFEDWLFIKLYCKQTREEELIAFEIADFYNQISDQYPVRHFFMRYRDPKPHIRLRFNGKAEVLYSLFPQLLNWLKSLREKGLVSESVITQYEREIERYGGLSLMEAAEQLFCEDSKVVEMMIRMHRMKDITISKEIAGMVSVIQFLEQFELTFEEQLTFLERNSLQNEYRTEFKKDREMYIEICNSDRDWDNLKKTSDGGMLYETLKTRKMAAAHYAFLIKKAFDNKDEVYSRIGSIIHLHCNRLFGTDRELENKILTLCRHSLYAQRYQKMNGSLAWK</sequence>
<name>SPAB_BACIU</name>
<accession>P39774</accession>
<accession>P33114</accession>
<accession>P36360</accession>
<reference key="1">
    <citation type="journal article" date="1994" name="Appl. Environ. Microbiol.">
        <title>Growth phase-dependent regulation and membrane localization of SpaB, a protein involved in biosynthesis of the lantibiotic subtilin.</title>
        <authorList>
            <person name="Gutowski-Eckel Z."/>
            <person name="Klein C."/>
            <person name="Siegers K."/>
            <person name="Bohm K."/>
            <person name="Hammelmann M."/>
            <person name="Entian K.-D."/>
        </authorList>
    </citation>
    <scope>NUCLEOTIDE SEQUENCE [GENOMIC DNA]</scope>
    <source>
        <strain>ATCC 6633 / PCI 219 / NRS 231</strain>
    </source>
</reference>
<reference key="2">
    <citation type="journal article" date="1994" name="Appl. Environ. Microbiol.">
        <title>Genes involved in self-protection against the lantibiotic subtilin produced by Bacillus subtilis ATCC 6633.</title>
        <authorList>
            <person name="Klein C."/>
            <person name="Entian K.-D."/>
        </authorList>
    </citation>
    <scope>NUCLEOTIDE SEQUENCE [GENOMIC DNA]</scope>
    <source>
        <strain>ATCC 6633 / PCI 219 / NRS 231</strain>
    </source>
</reference>
<reference key="3">
    <citation type="journal article" date="1992" name="J. Bacteriol.">
        <title>Determination of the sequence of spaE and identification of a promoter in the subtilin (spa) operon in Bacillus subtilis.</title>
        <authorList>
            <person name="Chung Y.J."/>
            <person name="Hansen J.N."/>
        </authorList>
    </citation>
    <scope>NUCLEOTIDE SEQUENCE [GENOMIC DNA]</scope>
    <source>
        <strain>ATCC 6633 / PCI 219 / NRS 231</strain>
    </source>
</reference>
<reference key="4">
    <citation type="journal article" date="1992" name="Appl. Environ. Microbiol.">
        <title>Analysis of genes involved in biosynthesis of the lantibiotic subtilin.</title>
        <authorList>
            <person name="Klein C."/>
            <person name="Kaletta C."/>
            <person name="Schnell N."/>
            <person name="Entian K.-D."/>
        </authorList>
    </citation>
    <scope>NUCLEOTIDE SEQUENCE [GENOMIC DNA] OF 641-1030</scope>
    <source>
        <strain>ATCC 6633 / PCI 219 / NRS 231</strain>
    </source>
</reference>
<reference key="5">
    <citation type="journal article" date="1992" name="J. Bacteriol.">
        <title>The subtilin gene of Bacillus subtilis ATCC 6633 is encoded in an operon that contains a homolog of the hemolysin B transport protein.</title>
        <authorList>
            <person name="Chung Y.J."/>
            <person name="Steen M.T."/>
            <person name="Hansen J.N."/>
        </authorList>
    </citation>
    <scope>NUCLEOTIDE SEQUENCE [GENOMIC DNA] OF 852-1030</scope>
    <source>
        <strain>ATCC 6633 / PCI 219 / NRS 231</strain>
    </source>
</reference>
<protein>
    <recommendedName>
        <fullName>Subtilin biosynthesis protein SpaB</fullName>
    </recommendedName>
</protein>